<accession>B2I102</accession>
<feature type="chain" id="PRO_1000143462" description="ATP synthase subunit beta">
    <location>
        <begin position="1"/>
        <end position="464"/>
    </location>
</feature>
<feature type="binding site" evidence="1">
    <location>
        <begin position="148"/>
        <end position="155"/>
    </location>
    <ligand>
        <name>ATP</name>
        <dbReference type="ChEBI" id="CHEBI:30616"/>
    </ligand>
</feature>
<proteinExistence type="inferred from homology"/>
<protein>
    <recommendedName>
        <fullName evidence="1">ATP synthase subunit beta</fullName>
        <ecNumber evidence="1">7.1.2.2</ecNumber>
    </recommendedName>
    <alternativeName>
        <fullName evidence="1">ATP synthase F1 sector subunit beta</fullName>
    </alternativeName>
    <alternativeName>
        <fullName evidence="1">F-ATPase subunit beta</fullName>
    </alternativeName>
</protein>
<keyword id="KW-0066">ATP synthesis</keyword>
<keyword id="KW-0067">ATP-binding</keyword>
<keyword id="KW-0997">Cell inner membrane</keyword>
<keyword id="KW-1003">Cell membrane</keyword>
<keyword id="KW-0139">CF(1)</keyword>
<keyword id="KW-0375">Hydrogen ion transport</keyword>
<keyword id="KW-0406">Ion transport</keyword>
<keyword id="KW-0472">Membrane</keyword>
<keyword id="KW-0547">Nucleotide-binding</keyword>
<keyword id="KW-1278">Translocase</keyword>
<keyword id="KW-0813">Transport</keyword>
<dbReference type="EC" id="7.1.2.2" evidence="1"/>
<dbReference type="EMBL" id="CP000863">
    <property type="protein sequence ID" value="ACC55490.1"/>
    <property type="molecule type" value="Genomic_DNA"/>
</dbReference>
<dbReference type="RefSeq" id="WP_000094481.1">
    <property type="nucleotide sequence ID" value="NZ_CP031380.1"/>
</dbReference>
<dbReference type="SMR" id="B2I102"/>
<dbReference type="GeneID" id="92892167"/>
<dbReference type="KEGG" id="abc:ACICU_00178"/>
<dbReference type="HOGENOM" id="CLU_022398_0_2_6"/>
<dbReference type="Proteomes" id="UP000008839">
    <property type="component" value="Chromosome"/>
</dbReference>
<dbReference type="GO" id="GO:0005886">
    <property type="term" value="C:plasma membrane"/>
    <property type="evidence" value="ECO:0007669"/>
    <property type="project" value="UniProtKB-SubCell"/>
</dbReference>
<dbReference type="GO" id="GO:0045259">
    <property type="term" value="C:proton-transporting ATP synthase complex"/>
    <property type="evidence" value="ECO:0007669"/>
    <property type="project" value="UniProtKB-KW"/>
</dbReference>
<dbReference type="GO" id="GO:0005524">
    <property type="term" value="F:ATP binding"/>
    <property type="evidence" value="ECO:0007669"/>
    <property type="project" value="UniProtKB-UniRule"/>
</dbReference>
<dbReference type="GO" id="GO:0016887">
    <property type="term" value="F:ATP hydrolysis activity"/>
    <property type="evidence" value="ECO:0007669"/>
    <property type="project" value="InterPro"/>
</dbReference>
<dbReference type="GO" id="GO:0046933">
    <property type="term" value="F:proton-transporting ATP synthase activity, rotational mechanism"/>
    <property type="evidence" value="ECO:0007669"/>
    <property type="project" value="UniProtKB-UniRule"/>
</dbReference>
<dbReference type="CDD" id="cd18110">
    <property type="entry name" value="ATP-synt_F1_beta_C"/>
    <property type="match status" value="1"/>
</dbReference>
<dbReference type="CDD" id="cd18115">
    <property type="entry name" value="ATP-synt_F1_beta_N"/>
    <property type="match status" value="1"/>
</dbReference>
<dbReference type="CDD" id="cd01133">
    <property type="entry name" value="F1-ATPase_beta_CD"/>
    <property type="match status" value="1"/>
</dbReference>
<dbReference type="FunFam" id="1.10.1140.10:FF:000001">
    <property type="entry name" value="ATP synthase subunit beta"/>
    <property type="match status" value="1"/>
</dbReference>
<dbReference type="FunFam" id="3.40.50.300:FF:000004">
    <property type="entry name" value="ATP synthase subunit beta"/>
    <property type="match status" value="1"/>
</dbReference>
<dbReference type="Gene3D" id="2.40.10.170">
    <property type="match status" value="1"/>
</dbReference>
<dbReference type="Gene3D" id="1.10.1140.10">
    <property type="entry name" value="Bovine Mitochondrial F1-atpase, Atp Synthase Beta Chain, Chain D, domain 3"/>
    <property type="match status" value="1"/>
</dbReference>
<dbReference type="Gene3D" id="3.40.50.300">
    <property type="entry name" value="P-loop containing nucleotide triphosphate hydrolases"/>
    <property type="match status" value="1"/>
</dbReference>
<dbReference type="HAMAP" id="MF_01347">
    <property type="entry name" value="ATP_synth_beta_bact"/>
    <property type="match status" value="1"/>
</dbReference>
<dbReference type="InterPro" id="IPR003593">
    <property type="entry name" value="AAA+_ATPase"/>
</dbReference>
<dbReference type="InterPro" id="IPR055190">
    <property type="entry name" value="ATP-synt_VA_C"/>
</dbReference>
<dbReference type="InterPro" id="IPR005722">
    <property type="entry name" value="ATP_synth_F1_bsu"/>
</dbReference>
<dbReference type="InterPro" id="IPR020003">
    <property type="entry name" value="ATPase_a/bsu_AS"/>
</dbReference>
<dbReference type="InterPro" id="IPR050053">
    <property type="entry name" value="ATPase_alpha/beta_chains"/>
</dbReference>
<dbReference type="InterPro" id="IPR004100">
    <property type="entry name" value="ATPase_F1/V1/A1_a/bsu_N"/>
</dbReference>
<dbReference type="InterPro" id="IPR036121">
    <property type="entry name" value="ATPase_F1/V1/A1_a/bsu_N_sf"/>
</dbReference>
<dbReference type="InterPro" id="IPR000194">
    <property type="entry name" value="ATPase_F1/V1/A1_a/bsu_nucl-bd"/>
</dbReference>
<dbReference type="InterPro" id="IPR024034">
    <property type="entry name" value="ATPase_F1/V1_b/a_C"/>
</dbReference>
<dbReference type="InterPro" id="IPR027417">
    <property type="entry name" value="P-loop_NTPase"/>
</dbReference>
<dbReference type="NCBIfam" id="TIGR01039">
    <property type="entry name" value="atpD"/>
    <property type="match status" value="1"/>
</dbReference>
<dbReference type="PANTHER" id="PTHR15184">
    <property type="entry name" value="ATP SYNTHASE"/>
    <property type="match status" value="1"/>
</dbReference>
<dbReference type="PANTHER" id="PTHR15184:SF71">
    <property type="entry name" value="ATP SYNTHASE SUBUNIT BETA, MITOCHONDRIAL"/>
    <property type="match status" value="1"/>
</dbReference>
<dbReference type="Pfam" id="PF00006">
    <property type="entry name" value="ATP-synt_ab"/>
    <property type="match status" value="1"/>
</dbReference>
<dbReference type="Pfam" id="PF02874">
    <property type="entry name" value="ATP-synt_ab_N"/>
    <property type="match status" value="1"/>
</dbReference>
<dbReference type="Pfam" id="PF22919">
    <property type="entry name" value="ATP-synt_VA_C"/>
    <property type="match status" value="1"/>
</dbReference>
<dbReference type="SMART" id="SM00382">
    <property type="entry name" value="AAA"/>
    <property type="match status" value="1"/>
</dbReference>
<dbReference type="SUPFAM" id="SSF47917">
    <property type="entry name" value="C-terminal domain of alpha and beta subunits of F1 ATP synthase"/>
    <property type="match status" value="1"/>
</dbReference>
<dbReference type="SUPFAM" id="SSF50615">
    <property type="entry name" value="N-terminal domain of alpha and beta subunits of F1 ATP synthase"/>
    <property type="match status" value="1"/>
</dbReference>
<dbReference type="SUPFAM" id="SSF52540">
    <property type="entry name" value="P-loop containing nucleoside triphosphate hydrolases"/>
    <property type="match status" value="1"/>
</dbReference>
<dbReference type="PROSITE" id="PS00152">
    <property type="entry name" value="ATPASE_ALPHA_BETA"/>
    <property type="match status" value="1"/>
</dbReference>
<name>ATPB_ACIBC</name>
<evidence type="ECO:0000255" key="1">
    <source>
        <dbReference type="HAMAP-Rule" id="MF_01347"/>
    </source>
</evidence>
<sequence>MSSGRIIQIIGAVIDVEFERTSVPKIYDALQVDGTETTLEVQQQLGDGVVRTIAMGSTEGLKRGLTVTSTNAPISVPVGTATLGRIMDVLGRPIDEAGPVATEERLPIHRQAPSYAEQAASTDLLETGIKVIDLLCPFAKGGKVGLFGGAGVGKTVNMMELINNIAKAHSGLSVFAGVGERTREGNDFYHEMKDSNVLDKVAMVYGQMNEPPGNRLRVALTGLTMAEYFRDEKDENGKGRDVLLFVDNIYRYTLAGTEVSALLGRMPSAVGYQPTLAEEMGVLQERITSTKSGSITSIQAVYVPADDLTDPSPATTFAHLDATVVLSRDIASSGIYPAIDPLDSTSRQLDPLVVGQEHYEIARAVQNVLQRYKELKDIIAILGMDELAEEDKLVVYRARKIQRFFSQPFHVAEVFTGAPGKLVPLKETIRGFKGLLAGEYDHIPEQAFYMVGGIDEVIAKAEKL</sequence>
<comment type="function">
    <text evidence="1">Produces ATP from ADP in the presence of a proton gradient across the membrane. The catalytic sites are hosted primarily by the beta subunits.</text>
</comment>
<comment type="catalytic activity">
    <reaction evidence="1">
        <text>ATP + H2O + 4 H(+)(in) = ADP + phosphate + 5 H(+)(out)</text>
        <dbReference type="Rhea" id="RHEA:57720"/>
        <dbReference type="ChEBI" id="CHEBI:15377"/>
        <dbReference type="ChEBI" id="CHEBI:15378"/>
        <dbReference type="ChEBI" id="CHEBI:30616"/>
        <dbReference type="ChEBI" id="CHEBI:43474"/>
        <dbReference type="ChEBI" id="CHEBI:456216"/>
        <dbReference type="EC" id="7.1.2.2"/>
    </reaction>
</comment>
<comment type="subunit">
    <text evidence="1">F-type ATPases have 2 components, CF(1) - the catalytic core - and CF(0) - the membrane proton channel. CF(1) has five subunits: alpha(3), beta(3), gamma(1), delta(1), epsilon(1). CF(0) has three main subunits: a(1), b(2) and c(9-12). The alpha and beta chains form an alternating ring which encloses part of the gamma chain. CF(1) is attached to CF(0) by a central stalk formed by the gamma and epsilon chains, while a peripheral stalk is formed by the delta and b chains.</text>
</comment>
<comment type="subcellular location">
    <subcellularLocation>
        <location evidence="1">Cell inner membrane</location>
        <topology evidence="1">Peripheral membrane protein</topology>
    </subcellularLocation>
</comment>
<comment type="similarity">
    <text evidence="1">Belongs to the ATPase alpha/beta chains family.</text>
</comment>
<organism>
    <name type="scientific">Acinetobacter baumannii (strain ACICU)</name>
    <dbReference type="NCBI Taxonomy" id="405416"/>
    <lineage>
        <taxon>Bacteria</taxon>
        <taxon>Pseudomonadati</taxon>
        <taxon>Pseudomonadota</taxon>
        <taxon>Gammaproteobacteria</taxon>
        <taxon>Moraxellales</taxon>
        <taxon>Moraxellaceae</taxon>
        <taxon>Acinetobacter</taxon>
        <taxon>Acinetobacter calcoaceticus/baumannii complex</taxon>
    </lineage>
</organism>
<reference key="1">
    <citation type="journal article" date="2008" name="Antimicrob. Agents Chemother.">
        <title>Whole-genome pyrosequencing of an epidemic multidrug-resistant Acinetobacter baumannii strain belonging to the European clone II group.</title>
        <authorList>
            <person name="Iacono M."/>
            <person name="Villa L."/>
            <person name="Fortini D."/>
            <person name="Bordoni R."/>
            <person name="Imperi F."/>
            <person name="Bonnal R.J."/>
            <person name="Sicheritz-Ponten T."/>
            <person name="De Bellis G."/>
            <person name="Visca P."/>
            <person name="Cassone A."/>
            <person name="Carattoli A."/>
        </authorList>
    </citation>
    <scope>NUCLEOTIDE SEQUENCE [LARGE SCALE GENOMIC DNA]</scope>
    <source>
        <strain>ACICU</strain>
    </source>
</reference>
<gene>
    <name evidence="1" type="primary">atpD</name>
    <name type="ordered locus">ACICU_00178</name>
</gene>